<evidence type="ECO:0000250" key="1"/>
<evidence type="ECO:0000305" key="2"/>
<sequence>MPPKFDPSQVVDVYVRVTGGEVGAASSLAPKIGPLGLSPKKIGEDIAKETANDWKGLRVTVKLTVQNRQAKVSVVPSAAALVIKALKEPERDRKKTKNIKHSGHISLDDVIEIAKIMKHRSMAKELAGTVKEILRTCVSVGCTVDGKDPKDLQQEIADGDVEIPLD</sequence>
<reference key="1">
    <citation type="submission" date="1997-03" db="EMBL/GenBank/DDBJ databases">
        <title>Molecular cloning and nucleotide sequence of a ribosomal protein L12 from apricot.</title>
        <authorList>
            <person name="Mbeguie-A-Mbeguie D."/>
            <person name="Gomez R.-M."/>
            <person name="Fils-Lycaon B.R."/>
        </authorList>
    </citation>
    <scope>NUCLEOTIDE SEQUENCE [MRNA]</scope>
    <source>
        <strain>cv. Bergeron</strain>
    </source>
</reference>
<feature type="chain" id="PRO_0000104463" description="Large ribosomal subunit protein uL11">
    <location>
        <begin position="1"/>
        <end position="166"/>
    </location>
</feature>
<gene>
    <name type="primary">RPL12</name>
</gene>
<dbReference type="EMBL" id="U93168">
    <property type="protein sequence ID" value="AAB97143.1"/>
    <property type="molecule type" value="mRNA"/>
</dbReference>
<dbReference type="SMR" id="O50003"/>
<dbReference type="GO" id="GO:0022625">
    <property type="term" value="C:cytosolic large ribosomal subunit"/>
    <property type="evidence" value="ECO:0007669"/>
    <property type="project" value="TreeGrafter"/>
</dbReference>
<dbReference type="GO" id="GO:0070180">
    <property type="term" value="F:large ribosomal subunit rRNA binding"/>
    <property type="evidence" value="ECO:0007669"/>
    <property type="project" value="TreeGrafter"/>
</dbReference>
<dbReference type="GO" id="GO:0003735">
    <property type="term" value="F:structural constituent of ribosome"/>
    <property type="evidence" value="ECO:0007669"/>
    <property type="project" value="InterPro"/>
</dbReference>
<dbReference type="GO" id="GO:0006412">
    <property type="term" value="P:translation"/>
    <property type="evidence" value="ECO:0007669"/>
    <property type="project" value="InterPro"/>
</dbReference>
<dbReference type="FunFam" id="1.10.10.250:FF:000002">
    <property type="entry name" value="60S ribosomal protein L12"/>
    <property type="match status" value="1"/>
</dbReference>
<dbReference type="FunFam" id="3.30.1550.10:FF:000002">
    <property type="entry name" value="60S ribosomal protein L12"/>
    <property type="match status" value="1"/>
</dbReference>
<dbReference type="Gene3D" id="1.10.10.250">
    <property type="entry name" value="Ribosomal protein L11, C-terminal domain"/>
    <property type="match status" value="1"/>
</dbReference>
<dbReference type="Gene3D" id="3.30.1550.10">
    <property type="entry name" value="Ribosomal protein L11/L12, N-terminal domain"/>
    <property type="match status" value="1"/>
</dbReference>
<dbReference type="HAMAP" id="MF_00736">
    <property type="entry name" value="Ribosomal_uL11"/>
    <property type="match status" value="1"/>
</dbReference>
<dbReference type="InterPro" id="IPR000911">
    <property type="entry name" value="Ribosomal_uL11"/>
</dbReference>
<dbReference type="InterPro" id="IPR020783">
    <property type="entry name" value="Ribosomal_uL11_C"/>
</dbReference>
<dbReference type="InterPro" id="IPR036769">
    <property type="entry name" value="Ribosomal_uL11_C_sf"/>
</dbReference>
<dbReference type="InterPro" id="IPR020784">
    <property type="entry name" value="Ribosomal_uL11_N"/>
</dbReference>
<dbReference type="InterPro" id="IPR036796">
    <property type="entry name" value="Ribosomal_uL11_N_sf"/>
</dbReference>
<dbReference type="PANTHER" id="PTHR11661">
    <property type="entry name" value="60S RIBOSOMAL PROTEIN L12"/>
    <property type="match status" value="1"/>
</dbReference>
<dbReference type="PANTHER" id="PTHR11661:SF44">
    <property type="entry name" value="LARGE RIBOSOMAL SUBUNIT PROTEIN UL11X"/>
    <property type="match status" value="1"/>
</dbReference>
<dbReference type="Pfam" id="PF00298">
    <property type="entry name" value="Ribosomal_L11"/>
    <property type="match status" value="1"/>
</dbReference>
<dbReference type="Pfam" id="PF03946">
    <property type="entry name" value="Ribosomal_L11_N"/>
    <property type="match status" value="1"/>
</dbReference>
<dbReference type="SMART" id="SM00649">
    <property type="entry name" value="RL11"/>
    <property type="match status" value="1"/>
</dbReference>
<dbReference type="SUPFAM" id="SSF54747">
    <property type="entry name" value="Ribosomal L11/L12e N-terminal domain"/>
    <property type="match status" value="1"/>
</dbReference>
<dbReference type="SUPFAM" id="SSF46906">
    <property type="entry name" value="Ribosomal protein L11, C-terminal domain"/>
    <property type="match status" value="1"/>
</dbReference>
<proteinExistence type="evidence at transcript level"/>
<comment type="function">
    <text evidence="1">This protein binds directly to 26S ribosomal RNA.</text>
</comment>
<comment type="similarity">
    <text evidence="2">Belongs to the universal ribosomal protein uL11 family.</text>
</comment>
<accession>O50003</accession>
<organism>
    <name type="scientific">Prunus armeniaca</name>
    <name type="common">Apricot</name>
    <name type="synonym">Armeniaca vulgaris</name>
    <dbReference type="NCBI Taxonomy" id="36596"/>
    <lineage>
        <taxon>Eukaryota</taxon>
        <taxon>Viridiplantae</taxon>
        <taxon>Streptophyta</taxon>
        <taxon>Embryophyta</taxon>
        <taxon>Tracheophyta</taxon>
        <taxon>Spermatophyta</taxon>
        <taxon>Magnoliopsida</taxon>
        <taxon>eudicotyledons</taxon>
        <taxon>Gunneridae</taxon>
        <taxon>Pentapetalae</taxon>
        <taxon>rosids</taxon>
        <taxon>fabids</taxon>
        <taxon>Rosales</taxon>
        <taxon>Rosaceae</taxon>
        <taxon>Amygdaloideae</taxon>
        <taxon>Amygdaleae</taxon>
        <taxon>Prunus</taxon>
    </lineage>
</organism>
<protein>
    <recommendedName>
        <fullName evidence="2">Large ribosomal subunit protein uL11</fullName>
    </recommendedName>
    <alternativeName>
        <fullName>60S ribosomal protein L12</fullName>
    </alternativeName>
</protein>
<keyword id="KW-0687">Ribonucleoprotein</keyword>
<keyword id="KW-0689">Ribosomal protein</keyword>
<keyword id="KW-0694">RNA-binding</keyword>
<keyword id="KW-0699">rRNA-binding</keyword>
<name>RL12_PRUAR</name>